<reference key="1">
    <citation type="journal article" date="1981" name="J. Virol.">
        <title>Antigenic drift in the hemagglutinin of the Hong Kong influenza subtype: correlation of amino acid changes with alterations in viral antigenicity.</title>
        <authorList>
            <person name="Sleigh M.J."/>
            <person name="Both G.W."/>
            <person name="Underwood P.A."/>
            <person name="Bender V.J."/>
        </authorList>
    </citation>
    <scope>NUCLEOTIDE SEQUENCE [GENOMIC RNA]</scope>
</reference>
<reference key="2">
    <citation type="journal article" date="1994" name="Nature">
        <title>Crystal structure of the human class II MHC protein HLA-DR1 complexed with an influenza virus peptide.</title>
        <authorList>
            <person name="Stern L.J."/>
            <person name="Brown J.H."/>
            <person name="Jardetzky T.J."/>
            <person name="Gorga J.C."/>
            <person name="Urban R.G."/>
            <person name="Strominger J.L."/>
            <person name="Wiley D.C."/>
        </authorList>
    </citation>
    <scope>X-RAY CRYSTALLOGRAPHY (2.8 ANGSTROMS) OF 306-318</scope>
</reference>
<gene>
    <name type="primary">HA</name>
</gene>
<name>HEMA_I69A0</name>
<comment type="function">
    <text>Binds to sialic acid-containing receptors on the cell surface, bringing about the attachment of the virus particle to the cell. This attachment induces virion internalization of about two third of the virus particles through clathrin-dependent endocytosis and about one third through a clathrin- and caveolin-independent pathway. Plays a major role in the determination of host range restriction and virulence. Class I viral fusion protein. Responsible for penetration of the virus into the cell cytoplasm by mediating the fusion of the membrane of the endocytosed virus particle with the endosomal membrane. Low pH in endosomes induces an irreversible conformational change in HA2, releasing the fusion hydrophobic peptide. Several trimers are required to form a competent fusion pore.</text>
</comment>
<comment type="subunit">
    <text>Homotrimer of disulfide-linked HA1-HA2.</text>
</comment>
<comment type="subcellular location">
    <subcellularLocation>
        <location evidence="3">Virion membrane</location>
        <topology evidence="3">Single-pass type I membrane protein</topology>
    </subcellularLocation>
    <subcellularLocation>
        <location>Host apical cell membrane</location>
        <topology>Single-pass type I membrane protein</topology>
    </subcellularLocation>
    <text>Targeted to the apical plasma membrane in epithelial polarized cells through a signal present in the transmembrane domain. Associated with glycosphingolipid- and cholesterol-enriched detergent-resistant lipid rafts.</text>
</comment>
<comment type="PTM">
    <text evidence="1">In natural infection, inactive HA is matured into HA1 and HA2 outside the cell by one or more trypsin-like, arginine-specific endoprotease secreted by the bronchial epithelial cells. One identified protease that may be involved in this process is secreted in lungs by club cells (By similarity).</text>
</comment>
<comment type="PTM">
    <text evidence="1">Palmitoylated.</text>
</comment>
<comment type="miscellaneous">
    <text>Major glycoprotein, comprises over 80% of the envelope proteins present in virus particle.</text>
</comment>
<comment type="miscellaneous">
    <text>The extent of infection into host organism is determined by HA. Influenza viruses bud from the apical surface of polarized epithelial cells (e.g. bronchial epithelial cells) into lumen of lungs and are therefore usually pneumotropic. The reason is that HA is cleaved by tryptase clara which is restricted to lungs. However, HAs of H5 and H7 pantropic avian viruses subtypes can be cleaved by furin and subtilisin-type enzymes, allowing the virus to grow in other organs than lungs.</text>
</comment>
<comment type="miscellaneous">
    <text>The influenza A genome consist of 8 RNA segments. Genetic variation of hemagglutinin and/or neuraminidase genes results in the emergence of new influenza strains. The mechanism of variation can be the result of point mutations or the result of genetic reassortment between segments of two different strains.</text>
</comment>
<comment type="similarity">
    <text evidence="3">Belongs to the influenza viruses hemagglutinin family.</text>
</comment>
<accession>P04664</accession>
<sequence>QDLPGNDNSTATLCLGHHAVPNGTLVKTITNDQIEVTNATELVQSSSTGKICNNPHRILDGINCTLIDALLGDPHCDVFQDETWDLFVERSKAFSNCYPYDVPDYASLRSLVASSGTLEFITEGFTWTGVTQNGGSNACKRGPDSGFFSRLNWLTKSGSTYPVLNVTMPNNDNFDKLYIWGVHHPSTNQEQTSLYVQASGRVTVSTRRSQQTIIPNIGSRPWVRGLSSRISIYWTIVKPGDVLVINSNGNLIAPRGYFKMRTGKSSIMRSDAPIDTCISECITPNGSIPNDKPFQNVNKITYGACPKYVKQNTLKLATGMRNVPEKQT</sequence>
<evidence type="ECO:0000250" key="1"/>
<evidence type="ECO:0000255" key="2"/>
<evidence type="ECO:0000305" key="3"/>
<proteinExistence type="evidence at protein level"/>
<keyword id="KW-0002">3D-structure</keyword>
<keyword id="KW-1167">Clathrin- and caveolin-independent endocytosis of virus by host</keyword>
<keyword id="KW-1165">Clathrin-mediated endocytosis of virus by host</keyword>
<keyword id="KW-1015">Disulfide bond</keyword>
<keyword id="KW-1170">Fusion of virus membrane with host endosomal membrane</keyword>
<keyword id="KW-1168">Fusion of virus membrane with host membrane</keyword>
<keyword id="KW-0325">Glycoprotein</keyword>
<keyword id="KW-0348">Hemagglutinin</keyword>
<keyword id="KW-1032">Host cell membrane</keyword>
<keyword id="KW-1043">Host membrane</keyword>
<keyword id="KW-0945">Host-virus interaction</keyword>
<keyword id="KW-0449">Lipoprotein</keyword>
<keyword id="KW-0472">Membrane</keyword>
<keyword id="KW-0564">Palmitate</keyword>
<keyword id="KW-0812">Transmembrane</keyword>
<keyword id="KW-1161">Viral attachment to host cell</keyword>
<keyword id="KW-0261">Viral envelope protein</keyword>
<keyword id="KW-1162">Viral penetration into host cytoplasm</keyword>
<keyword id="KW-0946">Virion</keyword>
<keyword id="KW-1164">Virus endocytosis by host</keyword>
<keyword id="KW-1160">Virus entry into host cell</keyword>
<protein>
    <recommendedName>
        <fullName>Hemagglutinin</fullName>
    </recommendedName>
    <component>
        <recommendedName>
            <fullName>Hemagglutinin HA1 chain</fullName>
        </recommendedName>
    </component>
</protein>
<organismHost>
    <name type="scientific">Aves</name>
    <dbReference type="NCBI Taxonomy" id="8782"/>
</organismHost>
<organismHost>
    <name type="scientific">Homo sapiens</name>
    <name type="common">Human</name>
    <dbReference type="NCBI Taxonomy" id="9606"/>
</organismHost>
<organismHost>
    <name type="scientific">Mysticeti</name>
    <name type="common">baleen whales</name>
    <dbReference type="NCBI Taxonomy" id="9761"/>
</organismHost>
<organismHost>
    <name type="scientific">Phocidae</name>
    <name type="common">true seals</name>
    <dbReference type="NCBI Taxonomy" id="9709"/>
</organismHost>
<organismHost>
    <name type="scientific">Sus scrofa</name>
    <name type="common">Pig</name>
    <dbReference type="NCBI Taxonomy" id="9823"/>
</organismHost>
<feature type="chain" id="PRO_0000038948" description="Hemagglutinin HA1 chain">
    <location>
        <begin position="1"/>
        <end position="328"/>
    </location>
</feature>
<feature type="glycosylation site" description="N-linked (GlcNAc...) asparagine; by host" evidence="2">
    <location>
        <position position="8"/>
    </location>
</feature>
<feature type="glycosylation site" description="N-linked (GlcNAc...) asparagine; by host" evidence="2">
    <location>
        <position position="22"/>
    </location>
</feature>
<feature type="glycosylation site" description="N-linked (GlcNAc...) asparagine; by host" evidence="2">
    <location>
        <position position="38"/>
    </location>
</feature>
<feature type="glycosylation site" description="N-linked (GlcNAc...) asparagine; by host" evidence="2">
    <location>
        <position position="63"/>
    </location>
</feature>
<feature type="glycosylation site" description="N-linked (GlcNAc...) asparagine; by host" evidence="2">
    <location>
        <position position="165"/>
    </location>
</feature>
<feature type="glycosylation site" description="N-linked (GlcNAc...) asparagine; by host" evidence="2">
    <location>
        <position position="285"/>
    </location>
</feature>
<feature type="disulfide bond" evidence="1">
    <location>
        <begin position="52"/>
        <end position="277"/>
    </location>
</feature>
<feature type="disulfide bond" evidence="1">
    <location>
        <begin position="64"/>
        <end position="76"/>
    </location>
</feature>
<feature type="disulfide bond" evidence="1">
    <location>
        <begin position="97"/>
        <end position="139"/>
    </location>
</feature>
<feature type="disulfide bond" evidence="1">
    <location>
        <begin position="281"/>
        <end position="305"/>
    </location>
</feature>
<feature type="non-terminal residue">
    <location>
        <position position="1"/>
    </location>
</feature>
<feature type="non-terminal residue">
    <location>
        <position position="328"/>
    </location>
</feature>
<organism>
    <name type="scientific">Influenza A virus (strain A/England/878/1969 H3N2)</name>
    <dbReference type="NCBI Taxonomy" id="387147"/>
    <lineage>
        <taxon>Viruses</taxon>
        <taxon>Riboviria</taxon>
        <taxon>Orthornavirae</taxon>
        <taxon>Negarnaviricota</taxon>
        <taxon>Polyploviricotina</taxon>
        <taxon>Insthoviricetes</taxon>
        <taxon>Articulavirales</taxon>
        <taxon>Orthomyxoviridae</taxon>
        <taxon>Alphainfluenzavirus</taxon>
        <taxon>Alphainfluenzavirus influenzae</taxon>
        <taxon>Influenza A virus</taxon>
    </lineage>
</organism>
<dbReference type="EMBL" id="K03335">
    <property type="protein sequence ID" value="AAA43184.1"/>
    <property type="molecule type" value="Genomic_RNA"/>
</dbReference>
<dbReference type="PDB" id="1DLH">
    <property type="method" value="X-ray"/>
    <property type="resolution" value="2.80 A"/>
    <property type="chains" value="C/F=306-318"/>
</dbReference>
<dbReference type="PDB" id="2G9H">
    <property type="method" value="X-ray"/>
    <property type="resolution" value="2.00 A"/>
    <property type="chains" value="C=306-318"/>
</dbReference>
<dbReference type="PDB" id="8EUQ">
    <property type="method" value="X-ray"/>
    <property type="resolution" value="3.09 A"/>
    <property type="chains" value="B/G=304-318"/>
</dbReference>
<dbReference type="PDBsum" id="1DLH"/>
<dbReference type="PDBsum" id="2G9H"/>
<dbReference type="PDBsum" id="8EUQ"/>
<dbReference type="SMR" id="P04664"/>
<dbReference type="GlyCosmos" id="P04664">
    <property type="glycosylation" value="6 sites, No reported glycans"/>
</dbReference>
<dbReference type="EvolutionaryTrace" id="P04664"/>
<dbReference type="GO" id="GO:0020002">
    <property type="term" value="C:host cell plasma membrane"/>
    <property type="evidence" value="ECO:0007669"/>
    <property type="project" value="UniProtKB-SubCell"/>
</dbReference>
<dbReference type="GO" id="GO:0016020">
    <property type="term" value="C:membrane"/>
    <property type="evidence" value="ECO:0007669"/>
    <property type="project" value="UniProtKB-KW"/>
</dbReference>
<dbReference type="GO" id="GO:0019031">
    <property type="term" value="C:viral envelope"/>
    <property type="evidence" value="ECO:0007669"/>
    <property type="project" value="UniProtKB-KW"/>
</dbReference>
<dbReference type="GO" id="GO:0055036">
    <property type="term" value="C:virion membrane"/>
    <property type="evidence" value="ECO:0007669"/>
    <property type="project" value="UniProtKB-SubCell"/>
</dbReference>
<dbReference type="GO" id="GO:0046789">
    <property type="term" value="F:host cell surface receptor binding"/>
    <property type="evidence" value="ECO:0007669"/>
    <property type="project" value="InterPro"/>
</dbReference>
<dbReference type="GO" id="GO:0075512">
    <property type="term" value="P:clathrin-dependent endocytosis of virus by host cell"/>
    <property type="evidence" value="ECO:0007669"/>
    <property type="project" value="UniProtKB-KW"/>
</dbReference>
<dbReference type="GO" id="GO:0039654">
    <property type="term" value="P:fusion of virus membrane with host endosome membrane"/>
    <property type="evidence" value="ECO:0007669"/>
    <property type="project" value="UniProtKB-KW"/>
</dbReference>
<dbReference type="GO" id="GO:0019064">
    <property type="term" value="P:fusion of virus membrane with host plasma membrane"/>
    <property type="evidence" value="ECO:0007669"/>
    <property type="project" value="InterPro"/>
</dbReference>
<dbReference type="GO" id="GO:0019062">
    <property type="term" value="P:virion attachment to host cell"/>
    <property type="evidence" value="ECO:0007669"/>
    <property type="project" value="UniProtKB-KW"/>
</dbReference>
<dbReference type="FunFam" id="3.90.209.20:FF:000001">
    <property type="entry name" value="Hemagglutinin"/>
    <property type="match status" value="1"/>
</dbReference>
<dbReference type="Gene3D" id="3.90.209.20">
    <property type="match status" value="1"/>
</dbReference>
<dbReference type="Gene3D" id="2.10.77.10">
    <property type="entry name" value="Hemagglutinin Chain A, Domain 2"/>
    <property type="match status" value="1"/>
</dbReference>
<dbReference type="InterPro" id="IPR008980">
    <property type="entry name" value="Capsid_hemagglutn"/>
</dbReference>
<dbReference type="InterPro" id="IPR013828">
    <property type="entry name" value="Hemagglutn_HA1_a/b_dom_sf"/>
</dbReference>
<dbReference type="InterPro" id="IPR000149">
    <property type="entry name" value="Hemagglutn_influenz_A"/>
</dbReference>
<dbReference type="InterPro" id="IPR001364">
    <property type="entry name" value="Hemagglutn_influenz_A/B"/>
</dbReference>
<dbReference type="Pfam" id="PF00509">
    <property type="entry name" value="Hemagglutinin"/>
    <property type="match status" value="1"/>
</dbReference>
<dbReference type="PRINTS" id="PR00330">
    <property type="entry name" value="HEMAGGLUTN1"/>
</dbReference>
<dbReference type="PRINTS" id="PR00329">
    <property type="entry name" value="HEMAGGLUTN12"/>
</dbReference>
<dbReference type="SUPFAM" id="SSF49818">
    <property type="entry name" value="Viral protein domain"/>
    <property type="match status" value="1"/>
</dbReference>